<protein>
    <recommendedName>
        <fullName evidence="1">Phosphopentomutase</fullName>
        <ecNumber evidence="1">5.4.2.7</ecNumber>
    </recommendedName>
    <alternativeName>
        <fullName evidence="1">Phosphodeoxyribomutase</fullName>
    </alternativeName>
</protein>
<evidence type="ECO:0000255" key="1">
    <source>
        <dbReference type="HAMAP-Rule" id="MF_00740"/>
    </source>
</evidence>
<gene>
    <name evidence="1" type="primary">deoB</name>
    <name type="synonym">ppm</name>
</gene>
<feature type="chain" id="PRO_0000199809" description="Phosphopentomutase">
    <location>
        <begin position="1"/>
        <end position="393"/>
    </location>
</feature>
<feature type="binding site" evidence="1">
    <location>
        <position position="14"/>
    </location>
    <ligand>
        <name>Mn(2+)</name>
        <dbReference type="ChEBI" id="CHEBI:29035"/>
        <label>1</label>
    </ligand>
</feature>
<feature type="binding site" evidence="1">
    <location>
        <position position="287"/>
    </location>
    <ligand>
        <name>Mn(2+)</name>
        <dbReference type="ChEBI" id="CHEBI:29035"/>
        <label>2</label>
    </ligand>
</feature>
<feature type="binding site" evidence="1">
    <location>
        <position position="292"/>
    </location>
    <ligand>
        <name>Mn(2+)</name>
        <dbReference type="ChEBI" id="CHEBI:29035"/>
        <label>2</label>
    </ligand>
</feature>
<feature type="binding site" evidence="1">
    <location>
        <position position="328"/>
    </location>
    <ligand>
        <name>Mn(2+)</name>
        <dbReference type="ChEBI" id="CHEBI:29035"/>
        <label>1</label>
    </ligand>
</feature>
<feature type="binding site" evidence="1">
    <location>
        <position position="329"/>
    </location>
    <ligand>
        <name>Mn(2+)</name>
        <dbReference type="ChEBI" id="CHEBI:29035"/>
        <label>1</label>
    </ligand>
</feature>
<feature type="binding site" evidence="1">
    <location>
        <position position="340"/>
    </location>
    <ligand>
        <name>Mn(2+)</name>
        <dbReference type="ChEBI" id="CHEBI:29035"/>
        <label>2</label>
    </ligand>
</feature>
<name>DEOB_GEOSE</name>
<dbReference type="EC" id="5.4.2.7" evidence="1"/>
<dbReference type="EMBL" id="AB008120">
    <property type="protein sequence ID" value="BAA22917.1"/>
    <property type="molecule type" value="Genomic_DNA"/>
</dbReference>
<dbReference type="PIR" id="JE0180">
    <property type="entry name" value="JE0180"/>
</dbReference>
<dbReference type="SMR" id="O24821"/>
<dbReference type="UniPathway" id="UPA00002">
    <property type="reaction ID" value="UER00467"/>
</dbReference>
<dbReference type="GO" id="GO:0005829">
    <property type="term" value="C:cytosol"/>
    <property type="evidence" value="ECO:0007669"/>
    <property type="project" value="TreeGrafter"/>
</dbReference>
<dbReference type="GO" id="GO:0000287">
    <property type="term" value="F:magnesium ion binding"/>
    <property type="evidence" value="ECO:0007669"/>
    <property type="project" value="InterPro"/>
</dbReference>
<dbReference type="GO" id="GO:0030145">
    <property type="term" value="F:manganese ion binding"/>
    <property type="evidence" value="ECO:0007669"/>
    <property type="project" value="UniProtKB-UniRule"/>
</dbReference>
<dbReference type="GO" id="GO:0008973">
    <property type="term" value="F:phosphopentomutase activity"/>
    <property type="evidence" value="ECO:0007669"/>
    <property type="project" value="UniProtKB-UniRule"/>
</dbReference>
<dbReference type="GO" id="GO:0006018">
    <property type="term" value="P:2-deoxyribose 1-phosphate catabolic process"/>
    <property type="evidence" value="ECO:0007669"/>
    <property type="project" value="UniProtKB-UniRule"/>
</dbReference>
<dbReference type="GO" id="GO:0006015">
    <property type="term" value="P:5-phosphoribose 1-diphosphate biosynthetic process"/>
    <property type="evidence" value="ECO:0007669"/>
    <property type="project" value="UniProtKB-UniPathway"/>
</dbReference>
<dbReference type="GO" id="GO:0043094">
    <property type="term" value="P:metabolic compound salvage"/>
    <property type="evidence" value="ECO:0007669"/>
    <property type="project" value="InterPro"/>
</dbReference>
<dbReference type="GO" id="GO:0009117">
    <property type="term" value="P:nucleotide metabolic process"/>
    <property type="evidence" value="ECO:0007669"/>
    <property type="project" value="InterPro"/>
</dbReference>
<dbReference type="CDD" id="cd16009">
    <property type="entry name" value="PPM"/>
    <property type="match status" value="1"/>
</dbReference>
<dbReference type="FunFam" id="3.30.70.1250:FF:000001">
    <property type="entry name" value="Phosphopentomutase"/>
    <property type="match status" value="1"/>
</dbReference>
<dbReference type="Gene3D" id="3.40.720.10">
    <property type="entry name" value="Alkaline Phosphatase, subunit A"/>
    <property type="match status" value="1"/>
</dbReference>
<dbReference type="Gene3D" id="3.30.70.1250">
    <property type="entry name" value="Phosphopentomutase"/>
    <property type="match status" value="1"/>
</dbReference>
<dbReference type="HAMAP" id="MF_00740">
    <property type="entry name" value="Phosphopentomut"/>
    <property type="match status" value="1"/>
</dbReference>
<dbReference type="InterPro" id="IPR017850">
    <property type="entry name" value="Alkaline_phosphatase_core_sf"/>
</dbReference>
<dbReference type="InterPro" id="IPR010045">
    <property type="entry name" value="DeoB"/>
</dbReference>
<dbReference type="InterPro" id="IPR006124">
    <property type="entry name" value="Metalloenzyme"/>
</dbReference>
<dbReference type="InterPro" id="IPR024052">
    <property type="entry name" value="Phosphopentomutase_DeoB_cap_sf"/>
</dbReference>
<dbReference type="NCBIfam" id="TIGR01696">
    <property type="entry name" value="deoB"/>
    <property type="match status" value="1"/>
</dbReference>
<dbReference type="NCBIfam" id="NF003766">
    <property type="entry name" value="PRK05362.1"/>
    <property type="match status" value="1"/>
</dbReference>
<dbReference type="PANTHER" id="PTHR21110">
    <property type="entry name" value="PHOSPHOPENTOMUTASE"/>
    <property type="match status" value="1"/>
</dbReference>
<dbReference type="PANTHER" id="PTHR21110:SF0">
    <property type="entry name" value="PHOSPHOPENTOMUTASE"/>
    <property type="match status" value="1"/>
</dbReference>
<dbReference type="Pfam" id="PF01676">
    <property type="entry name" value="Metalloenzyme"/>
    <property type="match status" value="1"/>
</dbReference>
<dbReference type="PIRSF" id="PIRSF001491">
    <property type="entry name" value="Ppentomutase"/>
    <property type="match status" value="1"/>
</dbReference>
<dbReference type="SUPFAM" id="SSF53649">
    <property type="entry name" value="Alkaline phosphatase-like"/>
    <property type="match status" value="1"/>
</dbReference>
<dbReference type="SUPFAM" id="SSF143856">
    <property type="entry name" value="DeoB insert domain-like"/>
    <property type="match status" value="1"/>
</dbReference>
<reference key="1">
    <citation type="journal article" date="1998" name="Biosci. Biotechnol. Biochem.">
        <title>Phosphopentomutase of Bacillus stearothermophilus TH6-2: the enzyme and its gene ppm.</title>
        <authorList>
            <person name="Hamamoto T."/>
            <person name="Noguchi T."/>
            <person name="Midorikawa Y."/>
        </authorList>
    </citation>
    <scope>NUCLEOTIDE SEQUENCE [GENOMIC DNA]</scope>
    <source>
        <strain>TH 6-2</strain>
    </source>
</reference>
<organism>
    <name type="scientific">Geobacillus stearothermophilus</name>
    <name type="common">Bacillus stearothermophilus</name>
    <dbReference type="NCBI Taxonomy" id="1422"/>
    <lineage>
        <taxon>Bacteria</taxon>
        <taxon>Bacillati</taxon>
        <taxon>Bacillota</taxon>
        <taxon>Bacilli</taxon>
        <taxon>Bacillales</taxon>
        <taxon>Anoxybacillaceae</taxon>
        <taxon>Geobacillus</taxon>
    </lineage>
</organism>
<comment type="function">
    <text evidence="1">Isomerase that catalyzes the conversion of deoxy-ribose 1-phosphate (dRib-1-P) and ribose 1-phosphate (Rib-1-P) to deoxy-ribose 5-phosphate (dRib-5-P) and ribose 5-phosphate (Rib-5-P), respectively.</text>
</comment>
<comment type="catalytic activity">
    <reaction evidence="1">
        <text>2-deoxy-alpha-D-ribose 1-phosphate = 2-deoxy-D-ribose 5-phosphate</text>
        <dbReference type="Rhea" id="RHEA:27658"/>
        <dbReference type="ChEBI" id="CHEBI:57259"/>
        <dbReference type="ChEBI" id="CHEBI:62877"/>
        <dbReference type="EC" id="5.4.2.7"/>
    </reaction>
</comment>
<comment type="catalytic activity">
    <reaction evidence="1">
        <text>alpha-D-ribose 1-phosphate = D-ribose 5-phosphate</text>
        <dbReference type="Rhea" id="RHEA:18793"/>
        <dbReference type="ChEBI" id="CHEBI:57720"/>
        <dbReference type="ChEBI" id="CHEBI:78346"/>
        <dbReference type="EC" id="5.4.2.7"/>
    </reaction>
</comment>
<comment type="cofactor">
    <cofactor evidence="1">
        <name>Mn(2+)</name>
        <dbReference type="ChEBI" id="CHEBI:29035"/>
    </cofactor>
    <text evidence="1">Binds 2 manganese ions.</text>
</comment>
<comment type="pathway">
    <text evidence="1">Carbohydrate degradation; 2-deoxy-D-ribose 1-phosphate degradation; D-glyceraldehyde 3-phosphate and acetaldehyde from 2-deoxy-alpha-D-ribose 1-phosphate: step 1/2.</text>
</comment>
<comment type="subcellular location">
    <subcellularLocation>
        <location evidence="1">Cytoplasm</location>
    </subcellularLocation>
</comment>
<comment type="similarity">
    <text evidence="1">Belongs to the phosphopentomutase family.</text>
</comment>
<keyword id="KW-0963">Cytoplasm</keyword>
<keyword id="KW-0413">Isomerase</keyword>
<keyword id="KW-0464">Manganese</keyword>
<keyword id="KW-0479">Metal-binding</keyword>
<accession>O24821</accession>
<sequence>MKPTCKRVFLIVMDSVGIGEAPDAEKYNDKGADTLGHIAEHRGGLNMPNMAKLGLSNIREIEGIPKAEKPLAYYTKMQEASAGKDTMTGHWELMGLRIDTPFQVFPDGFPKELIDELEKQTGRKVIGNKPASGTAIIDELGPEHMETGALIVYTSADSVLQIAAHEEVIPLEELYRICKIARELTLDEKYMVGRVIARPFIGTPGNFQRTANRHDYALKPFGRTVMNELQDAGYDVIAIGKIADIYDNEGVTKTLRTKSNMDGMDKLVNTLQMNFTGLSFLNLVDFDALYGHRRDPKGYGDALEEFDARLPEVFERLKEDDLLIITADHGNDPVHHGTDHTREYVPLLVYSPSMNGGKQLPLRETFADVGATIAENFGVKMPKYGTSFLQELK</sequence>
<proteinExistence type="inferred from homology"/>